<accession>A1B9C7</accession>
<dbReference type="EC" id="2.7.2.11" evidence="1"/>
<dbReference type="EMBL" id="CP000490">
    <property type="protein sequence ID" value="ABL72121.1"/>
    <property type="molecule type" value="Genomic_DNA"/>
</dbReference>
<dbReference type="RefSeq" id="WP_011750289.1">
    <property type="nucleotide sequence ID" value="NC_008687.1"/>
</dbReference>
<dbReference type="SMR" id="A1B9C7"/>
<dbReference type="STRING" id="318586.Pden_4055"/>
<dbReference type="EnsemblBacteria" id="ABL72121">
    <property type="protein sequence ID" value="ABL72121"/>
    <property type="gene ID" value="Pden_4055"/>
</dbReference>
<dbReference type="GeneID" id="93453719"/>
<dbReference type="KEGG" id="pde:Pden_4055"/>
<dbReference type="eggNOG" id="COG0263">
    <property type="taxonomic scope" value="Bacteria"/>
</dbReference>
<dbReference type="HOGENOM" id="CLU_025400_2_0_5"/>
<dbReference type="OrthoDB" id="9804434at2"/>
<dbReference type="UniPathway" id="UPA00098">
    <property type="reaction ID" value="UER00359"/>
</dbReference>
<dbReference type="Proteomes" id="UP000000361">
    <property type="component" value="Chromosome 2"/>
</dbReference>
<dbReference type="GO" id="GO:0005829">
    <property type="term" value="C:cytosol"/>
    <property type="evidence" value="ECO:0007669"/>
    <property type="project" value="TreeGrafter"/>
</dbReference>
<dbReference type="GO" id="GO:0005524">
    <property type="term" value="F:ATP binding"/>
    <property type="evidence" value="ECO:0007669"/>
    <property type="project" value="UniProtKB-KW"/>
</dbReference>
<dbReference type="GO" id="GO:0004349">
    <property type="term" value="F:glutamate 5-kinase activity"/>
    <property type="evidence" value="ECO:0007669"/>
    <property type="project" value="UniProtKB-UniRule"/>
</dbReference>
<dbReference type="GO" id="GO:0003723">
    <property type="term" value="F:RNA binding"/>
    <property type="evidence" value="ECO:0007669"/>
    <property type="project" value="InterPro"/>
</dbReference>
<dbReference type="GO" id="GO:0055129">
    <property type="term" value="P:L-proline biosynthetic process"/>
    <property type="evidence" value="ECO:0007669"/>
    <property type="project" value="UniProtKB-UniRule"/>
</dbReference>
<dbReference type="CDD" id="cd04242">
    <property type="entry name" value="AAK_G5K_ProB"/>
    <property type="match status" value="1"/>
</dbReference>
<dbReference type="CDD" id="cd21157">
    <property type="entry name" value="PUA_G5K"/>
    <property type="match status" value="1"/>
</dbReference>
<dbReference type="FunFam" id="3.40.1160.10:FF:000018">
    <property type="entry name" value="Glutamate 5-kinase"/>
    <property type="match status" value="1"/>
</dbReference>
<dbReference type="Gene3D" id="3.40.1160.10">
    <property type="entry name" value="Acetylglutamate kinase-like"/>
    <property type="match status" value="1"/>
</dbReference>
<dbReference type="Gene3D" id="2.30.130.10">
    <property type="entry name" value="PUA domain"/>
    <property type="match status" value="1"/>
</dbReference>
<dbReference type="HAMAP" id="MF_00456">
    <property type="entry name" value="ProB"/>
    <property type="match status" value="1"/>
</dbReference>
<dbReference type="InterPro" id="IPR036393">
    <property type="entry name" value="AceGlu_kinase-like_sf"/>
</dbReference>
<dbReference type="InterPro" id="IPR001048">
    <property type="entry name" value="Asp/Glu/Uridylate_kinase"/>
</dbReference>
<dbReference type="InterPro" id="IPR041739">
    <property type="entry name" value="G5K_ProB"/>
</dbReference>
<dbReference type="InterPro" id="IPR001057">
    <property type="entry name" value="Glu/AcGlu_kinase"/>
</dbReference>
<dbReference type="InterPro" id="IPR011529">
    <property type="entry name" value="Glu_5kinase"/>
</dbReference>
<dbReference type="InterPro" id="IPR005715">
    <property type="entry name" value="Glu_5kinase/COase_Synthase"/>
</dbReference>
<dbReference type="InterPro" id="IPR019797">
    <property type="entry name" value="Glutamate_5-kinase_CS"/>
</dbReference>
<dbReference type="InterPro" id="IPR002478">
    <property type="entry name" value="PUA"/>
</dbReference>
<dbReference type="InterPro" id="IPR015947">
    <property type="entry name" value="PUA-like_sf"/>
</dbReference>
<dbReference type="InterPro" id="IPR036974">
    <property type="entry name" value="PUA_sf"/>
</dbReference>
<dbReference type="NCBIfam" id="TIGR01027">
    <property type="entry name" value="proB"/>
    <property type="match status" value="1"/>
</dbReference>
<dbReference type="PANTHER" id="PTHR43654">
    <property type="entry name" value="GLUTAMATE 5-KINASE"/>
    <property type="match status" value="1"/>
</dbReference>
<dbReference type="PANTHER" id="PTHR43654:SF1">
    <property type="entry name" value="ISOPENTENYL PHOSPHATE KINASE"/>
    <property type="match status" value="1"/>
</dbReference>
<dbReference type="Pfam" id="PF00696">
    <property type="entry name" value="AA_kinase"/>
    <property type="match status" value="1"/>
</dbReference>
<dbReference type="Pfam" id="PF01472">
    <property type="entry name" value="PUA"/>
    <property type="match status" value="1"/>
</dbReference>
<dbReference type="PIRSF" id="PIRSF000729">
    <property type="entry name" value="GK"/>
    <property type="match status" value="1"/>
</dbReference>
<dbReference type="PRINTS" id="PR00474">
    <property type="entry name" value="GLU5KINASE"/>
</dbReference>
<dbReference type="SMART" id="SM00359">
    <property type="entry name" value="PUA"/>
    <property type="match status" value="1"/>
</dbReference>
<dbReference type="SUPFAM" id="SSF53633">
    <property type="entry name" value="Carbamate kinase-like"/>
    <property type="match status" value="1"/>
</dbReference>
<dbReference type="SUPFAM" id="SSF88697">
    <property type="entry name" value="PUA domain-like"/>
    <property type="match status" value="1"/>
</dbReference>
<dbReference type="PROSITE" id="PS00902">
    <property type="entry name" value="GLUTAMATE_5_KINASE"/>
    <property type="match status" value="1"/>
</dbReference>
<dbReference type="PROSITE" id="PS50890">
    <property type="entry name" value="PUA"/>
    <property type="match status" value="1"/>
</dbReference>
<gene>
    <name evidence="1" type="primary">proB</name>
    <name type="ordered locus">Pden_4055</name>
</gene>
<keyword id="KW-0028">Amino-acid biosynthesis</keyword>
<keyword id="KW-0067">ATP-binding</keyword>
<keyword id="KW-0963">Cytoplasm</keyword>
<keyword id="KW-0418">Kinase</keyword>
<keyword id="KW-0547">Nucleotide-binding</keyword>
<keyword id="KW-0641">Proline biosynthesis</keyword>
<keyword id="KW-1185">Reference proteome</keyword>
<keyword id="KW-0808">Transferase</keyword>
<organism>
    <name type="scientific">Paracoccus denitrificans (strain Pd 1222)</name>
    <dbReference type="NCBI Taxonomy" id="318586"/>
    <lineage>
        <taxon>Bacteria</taxon>
        <taxon>Pseudomonadati</taxon>
        <taxon>Pseudomonadota</taxon>
        <taxon>Alphaproteobacteria</taxon>
        <taxon>Rhodobacterales</taxon>
        <taxon>Paracoccaceae</taxon>
        <taxon>Paracoccus</taxon>
    </lineage>
</organism>
<sequence>MAAVTPKLGRAQRLVVKIGSALLVNGAGLRAEWLRALCDDVAQARARGTDVVLVSSGAIALGRQVLGLPAGPLRVEQSQAAAAVGQIKLARAYEEALAPHGVKTAQLLVTLDDTTDRRRYLNSRATMQTLLGLGVVPIVNENDTVATDEIRFGDNDRLAAQIAVTCGADQLLLLSDVDGLYTANPKTDPTARHLPVVGQITPEIEAMGGDPISGVSKGGMKTKLLAARTAVAGGCAMAIAEGSVLNPLSAVAQGARVTWFLPDTDPQAARKRWIAAMKPKGEITVDAGAALALGQGKSLLPAGVTAVSGRFGRGDPVVVLDGKGGRLASGLVRYSSTEARAIAGHRSDEIEGILGYPGRAALIHRDDMVV</sequence>
<name>PROB_PARDP</name>
<evidence type="ECO:0000255" key="1">
    <source>
        <dbReference type="HAMAP-Rule" id="MF_00456"/>
    </source>
</evidence>
<reference key="1">
    <citation type="submission" date="2006-12" db="EMBL/GenBank/DDBJ databases">
        <title>Complete sequence of chromosome 2 of Paracoccus denitrificans PD1222.</title>
        <authorList>
            <person name="Copeland A."/>
            <person name="Lucas S."/>
            <person name="Lapidus A."/>
            <person name="Barry K."/>
            <person name="Detter J.C."/>
            <person name="Glavina del Rio T."/>
            <person name="Hammon N."/>
            <person name="Israni S."/>
            <person name="Dalin E."/>
            <person name="Tice H."/>
            <person name="Pitluck S."/>
            <person name="Munk A.C."/>
            <person name="Brettin T."/>
            <person name="Bruce D."/>
            <person name="Han C."/>
            <person name="Tapia R."/>
            <person name="Gilna P."/>
            <person name="Schmutz J."/>
            <person name="Larimer F."/>
            <person name="Land M."/>
            <person name="Hauser L."/>
            <person name="Kyrpides N."/>
            <person name="Lykidis A."/>
            <person name="Spiro S."/>
            <person name="Richardson D.J."/>
            <person name="Moir J.W.B."/>
            <person name="Ferguson S.J."/>
            <person name="van Spanning R.J.M."/>
            <person name="Richardson P."/>
        </authorList>
    </citation>
    <scope>NUCLEOTIDE SEQUENCE [LARGE SCALE GENOMIC DNA]</scope>
    <source>
        <strain>Pd 1222</strain>
    </source>
</reference>
<protein>
    <recommendedName>
        <fullName evidence="1">Glutamate 5-kinase</fullName>
        <ecNumber evidence="1">2.7.2.11</ecNumber>
    </recommendedName>
    <alternativeName>
        <fullName evidence="1">Gamma-glutamyl kinase</fullName>
        <shortName evidence="1">GK</shortName>
    </alternativeName>
</protein>
<feature type="chain" id="PRO_1000081084" description="Glutamate 5-kinase">
    <location>
        <begin position="1"/>
        <end position="370"/>
    </location>
</feature>
<feature type="domain" description="PUA" evidence="1">
    <location>
        <begin position="280"/>
        <end position="357"/>
    </location>
</feature>
<feature type="binding site" evidence="1">
    <location>
        <position position="17"/>
    </location>
    <ligand>
        <name>ATP</name>
        <dbReference type="ChEBI" id="CHEBI:30616"/>
    </ligand>
</feature>
<feature type="binding site" evidence="1">
    <location>
        <position position="56"/>
    </location>
    <ligand>
        <name>substrate</name>
    </ligand>
</feature>
<feature type="binding site" evidence="1">
    <location>
        <position position="143"/>
    </location>
    <ligand>
        <name>substrate</name>
    </ligand>
</feature>
<feature type="binding site" evidence="1">
    <location>
        <position position="155"/>
    </location>
    <ligand>
        <name>substrate</name>
    </ligand>
</feature>
<feature type="binding site" evidence="1">
    <location>
        <begin position="175"/>
        <end position="176"/>
    </location>
    <ligand>
        <name>ATP</name>
        <dbReference type="ChEBI" id="CHEBI:30616"/>
    </ligand>
</feature>
<proteinExistence type="inferred from homology"/>
<comment type="function">
    <text evidence="1">Catalyzes the transfer of a phosphate group to glutamate to form L-glutamate 5-phosphate.</text>
</comment>
<comment type="catalytic activity">
    <reaction evidence="1">
        <text>L-glutamate + ATP = L-glutamyl 5-phosphate + ADP</text>
        <dbReference type="Rhea" id="RHEA:14877"/>
        <dbReference type="ChEBI" id="CHEBI:29985"/>
        <dbReference type="ChEBI" id="CHEBI:30616"/>
        <dbReference type="ChEBI" id="CHEBI:58274"/>
        <dbReference type="ChEBI" id="CHEBI:456216"/>
        <dbReference type="EC" id="2.7.2.11"/>
    </reaction>
</comment>
<comment type="pathway">
    <text evidence="1">Amino-acid biosynthesis; L-proline biosynthesis; L-glutamate 5-semialdehyde from L-glutamate: step 1/2.</text>
</comment>
<comment type="subcellular location">
    <subcellularLocation>
        <location evidence="1">Cytoplasm</location>
    </subcellularLocation>
</comment>
<comment type="similarity">
    <text evidence="1">Belongs to the glutamate 5-kinase family.</text>
</comment>